<name>XPT_BACMK</name>
<gene>
    <name evidence="1" type="primary">xpt</name>
    <name type="ordered locus">BcerKBAB4_1490</name>
</gene>
<reference key="1">
    <citation type="journal article" date="2008" name="Chem. Biol. Interact.">
        <title>Extending the Bacillus cereus group genomics to putative food-borne pathogens of different toxicity.</title>
        <authorList>
            <person name="Lapidus A."/>
            <person name="Goltsman E."/>
            <person name="Auger S."/>
            <person name="Galleron N."/>
            <person name="Segurens B."/>
            <person name="Dossat C."/>
            <person name="Land M.L."/>
            <person name="Broussolle V."/>
            <person name="Brillard J."/>
            <person name="Guinebretiere M.-H."/>
            <person name="Sanchis V."/>
            <person name="Nguen-the C."/>
            <person name="Lereclus D."/>
            <person name="Richardson P."/>
            <person name="Wincker P."/>
            <person name="Weissenbach J."/>
            <person name="Ehrlich S.D."/>
            <person name="Sorokin A."/>
        </authorList>
    </citation>
    <scope>NUCLEOTIDE SEQUENCE [LARGE SCALE GENOMIC DNA]</scope>
    <source>
        <strain>KBAB4</strain>
    </source>
</reference>
<protein>
    <recommendedName>
        <fullName evidence="1">Xanthine phosphoribosyltransferase</fullName>
        <shortName evidence="1">XPRTase</shortName>
        <ecNumber evidence="1">2.4.2.22</ecNumber>
    </recommendedName>
</protein>
<proteinExistence type="inferred from homology"/>
<organism>
    <name type="scientific">Bacillus mycoides (strain KBAB4)</name>
    <name type="common">Bacillus weihenstephanensis</name>
    <dbReference type="NCBI Taxonomy" id="315730"/>
    <lineage>
        <taxon>Bacteria</taxon>
        <taxon>Bacillati</taxon>
        <taxon>Bacillota</taxon>
        <taxon>Bacilli</taxon>
        <taxon>Bacillales</taxon>
        <taxon>Bacillaceae</taxon>
        <taxon>Bacillus</taxon>
        <taxon>Bacillus cereus group</taxon>
    </lineage>
</organism>
<evidence type="ECO:0000255" key="1">
    <source>
        <dbReference type="HAMAP-Rule" id="MF_01184"/>
    </source>
</evidence>
<keyword id="KW-0963">Cytoplasm</keyword>
<keyword id="KW-0328">Glycosyltransferase</keyword>
<keyword id="KW-0660">Purine salvage</keyword>
<keyword id="KW-0808">Transferase</keyword>
<accession>A9VMH5</accession>
<comment type="function">
    <text evidence="1">Converts the preformed base xanthine, a product of nucleic acid breakdown, to xanthosine 5'-monophosphate (XMP), so it can be reused for RNA or DNA synthesis.</text>
</comment>
<comment type="catalytic activity">
    <reaction evidence="1">
        <text>XMP + diphosphate = xanthine + 5-phospho-alpha-D-ribose 1-diphosphate</text>
        <dbReference type="Rhea" id="RHEA:10800"/>
        <dbReference type="ChEBI" id="CHEBI:17712"/>
        <dbReference type="ChEBI" id="CHEBI:33019"/>
        <dbReference type="ChEBI" id="CHEBI:57464"/>
        <dbReference type="ChEBI" id="CHEBI:58017"/>
        <dbReference type="EC" id="2.4.2.22"/>
    </reaction>
</comment>
<comment type="pathway">
    <text evidence="1">Purine metabolism; XMP biosynthesis via salvage pathway; XMP from xanthine: step 1/1.</text>
</comment>
<comment type="subunit">
    <text evidence="1">Homodimer.</text>
</comment>
<comment type="subcellular location">
    <subcellularLocation>
        <location evidence="1">Cytoplasm</location>
    </subcellularLocation>
</comment>
<comment type="similarity">
    <text evidence="1">Belongs to the purine/pyrimidine phosphoribosyltransferase family. Xpt subfamily.</text>
</comment>
<sequence>MKVLQEKILNEGKVLSGDVLKVDAFLNHQIDPVLMQEIGKEFAKRFKEENITKIVTIESSGIAPAVMAALELGVKVIFARKRKSLTLQDNMYVANVYSFTKQETNEISLSRNHIDENDRVLIIDDFLANGQAALGLMSLVEQSGASIAGIGIVIEKAFQDGGKKLREQGVRVESLAEIASLDNGTVTFVQQETAEVK</sequence>
<feature type="chain" id="PRO_1000138233" description="Xanthine phosphoribosyltransferase">
    <location>
        <begin position="1"/>
        <end position="197"/>
    </location>
</feature>
<feature type="binding site" evidence="1">
    <location>
        <position position="20"/>
    </location>
    <ligand>
        <name>xanthine</name>
        <dbReference type="ChEBI" id="CHEBI:17712"/>
    </ligand>
</feature>
<feature type="binding site" evidence="1">
    <location>
        <position position="27"/>
    </location>
    <ligand>
        <name>xanthine</name>
        <dbReference type="ChEBI" id="CHEBI:17712"/>
    </ligand>
</feature>
<feature type="binding site" evidence="1">
    <location>
        <begin position="128"/>
        <end position="132"/>
    </location>
    <ligand>
        <name>5-phospho-alpha-D-ribose 1-diphosphate</name>
        <dbReference type="ChEBI" id="CHEBI:58017"/>
    </ligand>
</feature>
<feature type="binding site" evidence="1">
    <location>
        <position position="156"/>
    </location>
    <ligand>
        <name>xanthine</name>
        <dbReference type="ChEBI" id="CHEBI:17712"/>
    </ligand>
</feature>
<dbReference type="EC" id="2.4.2.22" evidence="1"/>
<dbReference type="EMBL" id="CP000903">
    <property type="protein sequence ID" value="ABY42737.1"/>
    <property type="molecule type" value="Genomic_DNA"/>
</dbReference>
<dbReference type="RefSeq" id="WP_002030831.1">
    <property type="nucleotide sequence ID" value="NC_010184.1"/>
</dbReference>
<dbReference type="SMR" id="A9VMH5"/>
<dbReference type="KEGG" id="bwe:BcerKBAB4_1490"/>
<dbReference type="eggNOG" id="COG0503">
    <property type="taxonomic scope" value="Bacteria"/>
</dbReference>
<dbReference type="HOGENOM" id="CLU_099015_0_0_9"/>
<dbReference type="UniPathway" id="UPA00602">
    <property type="reaction ID" value="UER00658"/>
</dbReference>
<dbReference type="Proteomes" id="UP000002154">
    <property type="component" value="Chromosome"/>
</dbReference>
<dbReference type="GO" id="GO:0005737">
    <property type="term" value="C:cytoplasm"/>
    <property type="evidence" value="ECO:0007669"/>
    <property type="project" value="UniProtKB-SubCell"/>
</dbReference>
<dbReference type="GO" id="GO:0000310">
    <property type="term" value="F:xanthine phosphoribosyltransferase activity"/>
    <property type="evidence" value="ECO:0007669"/>
    <property type="project" value="UniProtKB-UniRule"/>
</dbReference>
<dbReference type="GO" id="GO:0006166">
    <property type="term" value="P:purine ribonucleoside salvage"/>
    <property type="evidence" value="ECO:0007669"/>
    <property type="project" value="UniProtKB-KW"/>
</dbReference>
<dbReference type="GO" id="GO:0046110">
    <property type="term" value="P:xanthine metabolic process"/>
    <property type="evidence" value="ECO:0007669"/>
    <property type="project" value="InterPro"/>
</dbReference>
<dbReference type="GO" id="GO:0032265">
    <property type="term" value="P:XMP salvage"/>
    <property type="evidence" value="ECO:0007669"/>
    <property type="project" value="UniProtKB-UniRule"/>
</dbReference>
<dbReference type="CDD" id="cd06223">
    <property type="entry name" value="PRTases_typeI"/>
    <property type="match status" value="1"/>
</dbReference>
<dbReference type="Gene3D" id="3.40.50.2020">
    <property type="match status" value="1"/>
</dbReference>
<dbReference type="HAMAP" id="MF_01184">
    <property type="entry name" value="XPRTase"/>
    <property type="match status" value="1"/>
</dbReference>
<dbReference type="InterPro" id="IPR000836">
    <property type="entry name" value="PRibTrfase_dom"/>
</dbReference>
<dbReference type="InterPro" id="IPR029057">
    <property type="entry name" value="PRTase-like"/>
</dbReference>
<dbReference type="InterPro" id="IPR050118">
    <property type="entry name" value="Pur/Pyrimidine_PRTase"/>
</dbReference>
<dbReference type="InterPro" id="IPR010079">
    <property type="entry name" value="Xanthine_PRibTrfase"/>
</dbReference>
<dbReference type="NCBIfam" id="NF006671">
    <property type="entry name" value="PRK09219.1"/>
    <property type="match status" value="1"/>
</dbReference>
<dbReference type="NCBIfam" id="TIGR01744">
    <property type="entry name" value="XPRTase"/>
    <property type="match status" value="1"/>
</dbReference>
<dbReference type="PANTHER" id="PTHR43864">
    <property type="entry name" value="HYPOXANTHINE/GUANINE PHOSPHORIBOSYLTRANSFERASE"/>
    <property type="match status" value="1"/>
</dbReference>
<dbReference type="PANTHER" id="PTHR43864:SF1">
    <property type="entry name" value="XANTHINE PHOSPHORIBOSYLTRANSFERASE"/>
    <property type="match status" value="1"/>
</dbReference>
<dbReference type="Pfam" id="PF00156">
    <property type="entry name" value="Pribosyltran"/>
    <property type="match status" value="1"/>
</dbReference>
<dbReference type="SUPFAM" id="SSF53271">
    <property type="entry name" value="PRTase-like"/>
    <property type="match status" value="1"/>
</dbReference>